<proteinExistence type="inferred from homology"/>
<keyword id="KW-0687">Ribonucleoprotein</keyword>
<keyword id="KW-0689">Ribosomal protein</keyword>
<keyword id="KW-0694">RNA-binding</keyword>
<keyword id="KW-0699">rRNA-binding</keyword>
<evidence type="ECO:0000255" key="1">
    <source>
        <dbReference type="HAMAP-Rule" id="MF_01307"/>
    </source>
</evidence>
<evidence type="ECO:0000305" key="2"/>
<dbReference type="EMBL" id="CP000713">
    <property type="protein sequence ID" value="ABQ93398.1"/>
    <property type="molecule type" value="Genomic_DNA"/>
</dbReference>
<dbReference type="SMR" id="A5WCK7"/>
<dbReference type="STRING" id="349106.PsycPRwf_0443"/>
<dbReference type="KEGG" id="prw:PsycPRwf_0443"/>
<dbReference type="eggNOG" id="COG0098">
    <property type="taxonomic scope" value="Bacteria"/>
</dbReference>
<dbReference type="HOGENOM" id="CLU_065898_2_2_6"/>
<dbReference type="GO" id="GO:0015935">
    <property type="term" value="C:small ribosomal subunit"/>
    <property type="evidence" value="ECO:0007669"/>
    <property type="project" value="InterPro"/>
</dbReference>
<dbReference type="GO" id="GO:0019843">
    <property type="term" value="F:rRNA binding"/>
    <property type="evidence" value="ECO:0007669"/>
    <property type="project" value="UniProtKB-UniRule"/>
</dbReference>
<dbReference type="GO" id="GO:0003735">
    <property type="term" value="F:structural constituent of ribosome"/>
    <property type="evidence" value="ECO:0007669"/>
    <property type="project" value="InterPro"/>
</dbReference>
<dbReference type="GO" id="GO:0006412">
    <property type="term" value="P:translation"/>
    <property type="evidence" value="ECO:0007669"/>
    <property type="project" value="UniProtKB-UniRule"/>
</dbReference>
<dbReference type="FunFam" id="3.30.160.20:FF:000001">
    <property type="entry name" value="30S ribosomal protein S5"/>
    <property type="match status" value="1"/>
</dbReference>
<dbReference type="FunFam" id="3.30.230.10:FF:000002">
    <property type="entry name" value="30S ribosomal protein S5"/>
    <property type="match status" value="1"/>
</dbReference>
<dbReference type="Gene3D" id="3.30.160.20">
    <property type="match status" value="1"/>
</dbReference>
<dbReference type="Gene3D" id="3.30.230.10">
    <property type="match status" value="1"/>
</dbReference>
<dbReference type="HAMAP" id="MF_01307_B">
    <property type="entry name" value="Ribosomal_uS5_B"/>
    <property type="match status" value="1"/>
</dbReference>
<dbReference type="InterPro" id="IPR020568">
    <property type="entry name" value="Ribosomal_Su5_D2-typ_SF"/>
</dbReference>
<dbReference type="InterPro" id="IPR000851">
    <property type="entry name" value="Ribosomal_uS5"/>
</dbReference>
<dbReference type="InterPro" id="IPR005712">
    <property type="entry name" value="Ribosomal_uS5_bac-type"/>
</dbReference>
<dbReference type="InterPro" id="IPR005324">
    <property type="entry name" value="Ribosomal_uS5_C"/>
</dbReference>
<dbReference type="InterPro" id="IPR013810">
    <property type="entry name" value="Ribosomal_uS5_N"/>
</dbReference>
<dbReference type="InterPro" id="IPR018192">
    <property type="entry name" value="Ribosomal_uS5_N_CS"/>
</dbReference>
<dbReference type="InterPro" id="IPR014721">
    <property type="entry name" value="Ribsml_uS5_D2-typ_fold_subgr"/>
</dbReference>
<dbReference type="NCBIfam" id="TIGR01021">
    <property type="entry name" value="rpsE_bact"/>
    <property type="match status" value="1"/>
</dbReference>
<dbReference type="PANTHER" id="PTHR48277">
    <property type="entry name" value="MITOCHONDRIAL RIBOSOMAL PROTEIN S5"/>
    <property type="match status" value="1"/>
</dbReference>
<dbReference type="PANTHER" id="PTHR48277:SF1">
    <property type="entry name" value="MITOCHONDRIAL RIBOSOMAL PROTEIN S5"/>
    <property type="match status" value="1"/>
</dbReference>
<dbReference type="Pfam" id="PF00333">
    <property type="entry name" value="Ribosomal_S5"/>
    <property type="match status" value="1"/>
</dbReference>
<dbReference type="Pfam" id="PF03719">
    <property type="entry name" value="Ribosomal_S5_C"/>
    <property type="match status" value="1"/>
</dbReference>
<dbReference type="SUPFAM" id="SSF54768">
    <property type="entry name" value="dsRNA-binding domain-like"/>
    <property type="match status" value="1"/>
</dbReference>
<dbReference type="SUPFAM" id="SSF54211">
    <property type="entry name" value="Ribosomal protein S5 domain 2-like"/>
    <property type="match status" value="1"/>
</dbReference>
<dbReference type="PROSITE" id="PS00585">
    <property type="entry name" value="RIBOSOMAL_S5"/>
    <property type="match status" value="1"/>
</dbReference>
<dbReference type="PROSITE" id="PS50881">
    <property type="entry name" value="S5_DSRBD"/>
    <property type="match status" value="1"/>
</dbReference>
<reference key="1">
    <citation type="submission" date="2007-05" db="EMBL/GenBank/DDBJ databases">
        <title>Complete sequence of chromosome of Psychrobacter sp. PRwf-1.</title>
        <authorList>
            <consortium name="US DOE Joint Genome Institute"/>
            <person name="Copeland A."/>
            <person name="Lucas S."/>
            <person name="Lapidus A."/>
            <person name="Barry K."/>
            <person name="Detter J.C."/>
            <person name="Glavina del Rio T."/>
            <person name="Hammon N."/>
            <person name="Israni S."/>
            <person name="Dalin E."/>
            <person name="Tice H."/>
            <person name="Pitluck S."/>
            <person name="Chain P."/>
            <person name="Malfatti S."/>
            <person name="Shin M."/>
            <person name="Vergez L."/>
            <person name="Schmutz J."/>
            <person name="Larimer F."/>
            <person name="Land M."/>
            <person name="Hauser L."/>
            <person name="Kyrpides N."/>
            <person name="Kim E."/>
            <person name="Tiedje J."/>
            <person name="Richardson P."/>
        </authorList>
    </citation>
    <scope>NUCLEOTIDE SEQUENCE [LARGE SCALE GENOMIC DNA]</scope>
    <source>
        <strain>PRwf-1</strain>
    </source>
</reference>
<comment type="function">
    <text evidence="1">With S4 and S12 plays an important role in translational accuracy.</text>
</comment>
<comment type="function">
    <text evidence="1">Located at the back of the 30S subunit body where it stabilizes the conformation of the head with respect to the body.</text>
</comment>
<comment type="subunit">
    <text evidence="1">Part of the 30S ribosomal subunit. Contacts proteins S4 and S8.</text>
</comment>
<comment type="domain">
    <text>The N-terminal domain interacts with the head of the 30S subunit; the C-terminal domain interacts with the body and contacts protein S4. The interaction surface between S4 and S5 is involved in control of translational fidelity.</text>
</comment>
<comment type="similarity">
    <text evidence="1">Belongs to the universal ribosomal protein uS5 family.</text>
</comment>
<organism>
    <name type="scientific">Psychrobacter sp. (strain PRwf-1)</name>
    <dbReference type="NCBI Taxonomy" id="349106"/>
    <lineage>
        <taxon>Bacteria</taxon>
        <taxon>Pseudomonadati</taxon>
        <taxon>Pseudomonadota</taxon>
        <taxon>Gammaproteobacteria</taxon>
        <taxon>Moraxellales</taxon>
        <taxon>Moraxellaceae</taxon>
        <taxon>Psychrobacter</taxon>
    </lineage>
</organism>
<protein>
    <recommendedName>
        <fullName evidence="1">Small ribosomal subunit protein uS5</fullName>
    </recommendedName>
    <alternativeName>
        <fullName evidence="2">30S ribosomal protein S5</fullName>
    </alternativeName>
</protein>
<name>RS5_PSYWF</name>
<gene>
    <name evidence="1" type="primary">rpsE</name>
    <name type="ordered locus">PsycPRwf_0443</name>
</gene>
<accession>A5WCK7</accession>
<feature type="chain" id="PRO_1000140886" description="Small ribosomal subunit protein uS5">
    <location>
        <begin position="1"/>
        <end position="165"/>
    </location>
</feature>
<feature type="domain" description="S5 DRBM" evidence="1">
    <location>
        <begin position="10"/>
        <end position="73"/>
    </location>
</feature>
<sequence>MAKVEQNDGLVEKLVSVDRVSKVVKGGRIFSFTALTVVGDGNGRVGFGRGKAREVPAAIQKALEAAKRNMITVDLDGATLQHPIIARHGASKVYMQPANEGTGVIAGGAVRAVLESAGVENVLTKCYGSTNPTNVVRATFNGLRDMSSPEKAAAKRGKSVDEILG</sequence>